<dbReference type="EMBL" id="CP000698">
    <property type="protein sequence ID" value="ABQ27319.1"/>
    <property type="molecule type" value="Genomic_DNA"/>
</dbReference>
<dbReference type="RefSeq" id="WP_011939985.1">
    <property type="nucleotide sequence ID" value="NC_009483.1"/>
</dbReference>
<dbReference type="SMR" id="A5G6A1"/>
<dbReference type="STRING" id="351605.Gura_3158"/>
<dbReference type="KEGG" id="gur:Gura_3158"/>
<dbReference type="HOGENOM" id="CLU_064548_7_0_7"/>
<dbReference type="OrthoDB" id="9805609at2"/>
<dbReference type="Proteomes" id="UP000006695">
    <property type="component" value="Chromosome"/>
</dbReference>
<dbReference type="GO" id="GO:1990904">
    <property type="term" value="C:ribonucleoprotein complex"/>
    <property type="evidence" value="ECO:0007669"/>
    <property type="project" value="UniProtKB-KW"/>
</dbReference>
<dbReference type="GO" id="GO:0005840">
    <property type="term" value="C:ribosome"/>
    <property type="evidence" value="ECO:0007669"/>
    <property type="project" value="UniProtKB-KW"/>
</dbReference>
<dbReference type="GO" id="GO:0003735">
    <property type="term" value="F:structural constituent of ribosome"/>
    <property type="evidence" value="ECO:0007669"/>
    <property type="project" value="InterPro"/>
</dbReference>
<dbReference type="GO" id="GO:0006412">
    <property type="term" value="P:translation"/>
    <property type="evidence" value="ECO:0007669"/>
    <property type="project" value="UniProtKB-UniRule"/>
</dbReference>
<dbReference type="Gene3D" id="2.20.150.30">
    <property type="match status" value="1"/>
</dbReference>
<dbReference type="Gene3D" id="2.30.170.40">
    <property type="entry name" value="Ribosomal protein L28/L24"/>
    <property type="match status" value="1"/>
</dbReference>
<dbReference type="HAMAP" id="MF_00373">
    <property type="entry name" value="Ribosomal_bL28"/>
    <property type="match status" value="1"/>
</dbReference>
<dbReference type="InterPro" id="IPR050096">
    <property type="entry name" value="Bacterial_rp_bL28"/>
</dbReference>
<dbReference type="InterPro" id="IPR026569">
    <property type="entry name" value="Ribosomal_bL28"/>
</dbReference>
<dbReference type="InterPro" id="IPR034704">
    <property type="entry name" value="Ribosomal_bL28/bL31-like_sf"/>
</dbReference>
<dbReference type="InterPro" id="IPR001383">
    <property type="entry name" value="Ribosomal_bL28_bact-type"/>
</dbReference>
<dbReference type="InterPro" id="IPR037147">
    <property type="entry name" value="Ribosomal_bL28_sf"/>
</dbReference>
<dbReference type="NCBIfam" id="TIGR00009">
    <property type="entry name" value="L28"/>
    <property type="match status" value="1"/>
</dbReference>
<dbReference type="PANTHER" id="PTHR39080">
    <property type="entry name" value="50S RIBOSOMAL PROTEIN L28"/>
    <property type="match status" value="1"/>
</dbReference>
<dbReference type="PANTHER" id="PTHR39080:SF1">
    <property type="entry name" value="LARGE RIBOSOMAL SUBUNIT PROTEIN BL28A"/>
    <property type="match status" value="1"/>
</dbReference>
<dbReference type="Pfam" id="PF00830">
    <property type="entry name" value="Ribosomal_L28"/>
    <property type="match status" value="1"/>
</dbReference>
<dbReference type="SUPFAM" id="SSF143800">
    <property type="entry name" value="L28p-like"/>
    <property type="match status" value="1"/>
</dbReference>
<feature type="chain" id="PRO_1000079851" description="Large ribosomal subunit protein bL28">
    <location>
        <begin position="1"/>
        <end position="63"/>
    </location>
</feature>
<protein>
    <recommendedName>
        <fullName evidence="1">Large ribosomal subunit protein bL28</fullName>
    </recommendedName>
    <alternativeName>
        <fullName evidence="2">50S ribosomal protein L28</fullName>
    </alternativeName>
</protein>
<reference key="1">
    <citation type="submission" date="2007-05" db="EMBL/GenBank/DDBJ databases">
        <title>Complete sequence of Geobacter uraniireducens Rf4.</title>
        <authorList>
            <consortium name="US DOE Joint Genome Institute"/>
            <person name="Copeland A."/>
            <person name="Lucas S."/>
            <person name="Lapidus A."/>
            <person name="Barry K."/>
            <person name="Detter J.C."/>
            <person name="Glavina del Rio T."/>
            <person name="Hammon N."/>
            <person name="Israni S."/>
            <person name="Dalin E."/>
            <person name="Tice H."/>
            <person name="Pitluck S."/>
            <person name="Chertkov O."/>
            <person name="Brettin T."/>
            <person name="Bruce D."/>
            <person name="Han C."/>
            <person name="Schmutz J."/>
            <person name="Larimer F."/>
            <person name="Land M."/>
            <person name="Hauser L."/>
            <person name="Kyrpides N."/>
            <person name="Mikhailova N."/>
            <person name="Shelobolina E."/>
            <person name="Aklujkar M."/>
            <person name="Lovley D."/>
            <person name="Richardson P."/>
        </authorList>
    </citation>
    <scope>NUCLEOTIDE SEQUENCE [LARGE SCALE GENOMIC DNA]</scope>
    <source>
        <strain>ATCC BAA-1134 / JCM 13001 / Rf4</strain>
    </source>
</reference>
<accession>A5G6A1</accession>
<proteinExistence type="inferred from homology"/>
<keyword id="KW-1185">Reference proteome</keyword>
<keyword id="KW-0687">Ribonucleoprotein</keyword>
<keyword id="KW-0689">Ribosomal protein</keyword>
<sequence length="63" mass="6945">MSKICEICGKGPSFGNNVSHANNKTSRIWYPNLQKIKAVKNGTVRSIKVCTRCIRSGHVTKAL</sequence>
<evidence type="ECO:0000255" key="1">
    <source>
        <dbReference type="HAMAP-Rule" id="MF_00373"/>
    </source>
</evidence>
<evidence type="ECO:0000305" key="2"/>
<organism>
    <name type="scientific">Geotalea uraniireducens (strain Rf4)</name>
    <name type="common">Geobacter uraniireducens</name>
    <dbReference type="NCBI Taxonomy" id="351605"/>
    <lineage>
        <taxon>Bacteria</taxon>
        <taxon>Pseudomonadati</taxon>
        <taxon>Thermodesulfobacteriota</taxon>
        <taxon>Desulfuromonadia</taxon>
        <taxon>Geobacterales</taxon>
        <taxon>Geobacteraceae</taxon>
        <taxon>Geotalea</taxon>
    </lineage>
</organism>
<gene>
    <name evidence="1" type="primary">rpmB</name>
    <name type="ordered locus">Gura_3158</name>
</gene>
<comment type="similarity">
    <text evidence="1">Belongs to the bacterial ribosomal protein bL28 family.</text>
</comment>
<name>RL28_GEOUR</name>